<organism>
    <name type="scientific">Crocosmia x crocosmiiflora</name>
    <name type="common">Montbretia</name>
    <name type="synonym">Crocosmia aurea x Crocosmia pottsii</name>
    <dbReference type="NCBI Taxonomy" id="1053288"/>
    <lineage>
        <taxon>Eukaryota</taxon>
        <taxon>Viridiplantae</taxon>
        <taxon>Streptophyta</taxon>
        <taxon>Embryophyta</taxon>
        <taxon>Tracheophyta</taxon>
        <taxon>Spermatophyta</taxon>
        <taxon>Magnoliopsida</taxon>
        <taxon>Liliopsida</taxon>
        <taxon>Asparagales</taxon>
        <taxon>Iridaceae</taxon>
        <taxon>Crocoideae</taxon>
        <taxon>Freesieae</taxon>
        <taxon>Crocosmia</taxon>
    </lineage>
</organism>
<comment type="function">
    <text evidence="3">Flavonoid 3',5'-hydroxylase that catalyzes the 3'- and 5'-hydroxylation of flavanones, dihydroflavonols and flavonols (PubMed:31004005). Converts narigenin to dihydrotricetin, dihydrokaempferol to dihydromyricetin and kaempferol to myricetin (PubMed:31004005).</text>
</comment>
<comment type="catalytic activity">
    <reaction evidence="3">
        <text>a 3',5'-unsubstituted flavanone + 2 reduced [NADPH--hemoprotein reductase] + 2 O2 = a 3',5'-dihydroxyflavanone + 2 oxidized [NADPH--hemoprotein reductase] + 2 H2O + 2 H(+)</text>
        <dbReference type="Rhea" id="RHEA:55448"/>
        <dbReference type="Rhea" id="RHEA-COMP:11964"/>
        <dbReference type="Rhea" id="RHEA-COMP:11965"/>
        <dbReference type="ChEBI" id="CHEBI:15377"/>
        <dbReference type="ChEBI" id="CHEBI:15378"/>
        <dbReference type="ChEBI" id="CHEBI:15379"/>
        <dbReference type="ChEBI" id="CHEBI:48025"/>
        <dbReference type="ChEBI" id="CHEBI:57618"/>
        <dbReference type="ChEBI" id="CHEBI:58210"/>
        <dbReference type="ChEBI" id="CHEBI:138897"/>
        <dbReference type="EC" id="1.14.14.81"/>
    </reaction>
    <physiologicalReaction direction="left-to-right" evidence="3">
        <dbReference type="Rhea" id="RHEA:55449"/>
    </physiologicalReaction>
</comment>
<comment type="catalytic activity">
    <reaction evidence="3">
        <text>(2S)-naringenin + 2 reduced [NADPH--hemoprotein reductase] + 2 O2 = (2S)-dihydrotricetin + 2 oxidized [NADPH--hemoprotein reductase] + 2 H2O + 2 H(+)</text>
        <dbReference type="Rhea" id="RHEA:61104"/>
        <dbReference type="Rhea" id="RHEA-COMP:11964"/>
        <dbReference type="Rhea" id="RHEA-COMP:11965"/>
        <dbReference type="ChEBI" id="CHEBI:15377"/>
        <dbReference type="ChEBI" id="CHEBI:15378"/>
        <dbReference type="ChEBI" id="CHEBI:15379"/>
        <dbReference type="ChEBI" id="CHEBI:17846"/>
        <dbReference type="ChEBI" id="CHEBI:48026"/>
        <dbReference type="ChEBI" id="CHEBI:57618"/>
        <dbReference type="ChEBI" id="CHEBI:58210"/>
    </reaction>
    <physiologicalReaction direction="left-to-right" evidence="3">
        <dbReference type="Rhea" id="RHEA:61105"/>
    </physiologicalReaction>
</comment>
<comment type="catalytic activity">
    <reaction evidence="3">
        <text>(2R,3R)-dihydrokaempferol + 2 reduced [NADPH--hemoprotein reductase] + 2 O2 = (2R,3R)-dihydromyricetin + 2 oxidized [NADPH--hemoprotein reductase] + 2 H2O + 2 H(+)</text>
        <dbReference type="Rhea" id="RHEA:61108"/>
        <dbReference type="Rhea" id="RHEA-COMP:11964"/>
        <dbReference type="Rhea" id="RHEA-COMP:11965"/>
        <dbReference type="ChEBI" id="CHEBI:15377"/>
        <dbReference type="ChEBI" id="CHEBI:15378"/>
        <dbReference type="ChEBI" id="CHEBI:15379"/>
        <dbReference type="ChEBI" id="CHEBI:15401"/>
        <dbReference type="ChEBI" id="CHEBI:28429"/>
        <dbReference type="ChEBI" id="CHEBI:57618"/>
        <dbReference type="ChEBI" id="CHEBI:58210"/>
    </reaction>
    <physiologicalReaction direction="left-to-right" evidence="3">
        <dbReference type="Rhea" id="RHEA:61109"/>
    </physiologicalReaction>
</comment>
<comment type="catalytic activity">
    <reaction evidence="3">
        <text>kaempferol + 2 reduced [NADPH--hemoprotein reductase] + 2 O2 = myricetin + 2 oxidized [NADPH--hemoprotein reductase] + 2 H2O + 2 H(+)</text>
        <dbReference type="Rhea" id="RHEA:61120"/>
        <dbReference type="Rhea" id="RHEA-COMP:11964"/>
        <dbReference type="Rhea" id="RHEA-COMP:11965"/>
        <dbReference type="ChEBI" id="CHEBI:15377"/>
        <dbReference type="ChEBI" id="CHEBI:15378"/>
        <dbReference type="ChEBI" id="CHEBI:15379"/>
        <dbReference type="ChEBI" id="CHEBI:57618"/>
        <dbReference type="ChEBI" id="CHEBI:58210"/>
        <dbReference type="ChEBI" id="CHEBI:58395"/>
        <dbReference type="ChEBI" id="CHEBI:58573"/>
    </reaction>
    <physiologicalReaction direction="left-to-right" evidence="3">
        <dbReference type="Rhea" id="RHEA:61121"/>
    </physiologicalReaction>
</comment>
<comment type="cofactor">
    <cofactor evidence="1">
        <name>heme</name>
        <dbReference type="ChEBI" id="CHEBI:30413"/>
    </cofactor>
</comment>
<comment type="pathway">
    <text evidence="5">Flavonoid metabolism.</text>
</comment>
<comment type="subcellular location">
    <subcellularLocation>
        <location evidence="2">Membrane</location>
        <topology evidence="2">Single-pass membrane protein</topology>
    </subcellularLocation>
</comment>
<comment type="tissue specificity">
    <text evidence="3">Expressed in young cromes.</text>
</comment>
<comment type="similarity">
    <text evidence="5">Belongs to the cytochrome P450 family.</text>
</comment>
<accession>A0A4D6Q414</accession>
<proteinExistence type="evidence at protein level"/>
<protein>
    <recommendedName>
        <fullName evidence="5">Flavonoid 3',5'-hydroxylase CYP75B138</fullName>
        <ecNumber evidence="3">1.14.14.81</ecNumber>
    </recommendedName>
    <alternativeName>
        <fullName evidence="4">Cytochrome P450 2</fullName>
        <shortName evidence="4">CcCYP2</shortName>
    </alternativeName>
    <alternativeName>
        <fullName evidence="4">Cytochrome P450 75B132</fullName>
    </alternativeName>
</protein>
<dbReference type="EC" id="1.14.14.81" evidence="3"/>
<dbReference type="EMBL" id="MK562521">
    <property type="protein sequence ID" value="QCF41216.1"/>
    <property type="molecule type" value="mRNA"/>
</dbReference>
<dbReference type="SMR" id="A0A4D6Q414"/>
<dbReference type="GO" id="GO:0016020">
    <property type="term" value="C:membrane"/>
    <property type="evidence" value="ECO:0007669"/>
    <property type="project" value="UniProtKB-SubCell"/>
</dbReference>
<dbReference type="GO" id="GO:0033772">
    <property type="term" value="F:flavonoid 3',5'-hydroxylase activity"/>
    <property type="evidence" value="ECO:0007669"/>
    <property type="project" value="UniProtKB-EC"/>
</dbReference>
<dbReference type="GO" id="GO:0020037">
    <property type="term" value="F:heme binding"/>
    <property type="evidence" value="ECO:0007669"/>
    <property type="project" value="InterPro"/>
</dbReference>
<dbReference type="GO" id="GO:0005506">
    <property type="term" value="F:iron ion binding"/>
    <property type="evidence" value="ECO:0007669"/>
    <property type="project" value="InterPro"/>
</dbReference>
<dbReference type="GO" id="GO:0009813">
    <property type="term" value="P:flavonoid biosynthetic process"/>
    <property type="evidence" value="ECO:0007669"/>
    <property type="project" value="UniProtKB-KW"/>
</dbReference>
<dbReference type="FunFam" id="1.10.630.10:FF:000026">
    <property type="entry name" value="Cytochrome P450 82C4"/>
    <property type="match status" value="1"/>
</dbReference>
<dbReference type="Gene3D" id="1.10.630.10">
    <property type="entry name" value="Cytochrome P450"/>
    <property type="match status" value="1"/>
</dbReference>
<dbReference type="InterPro" id="IPR001128">
    <property type="entry name" value="Cyt_P450"/>
</dbReference>
<dbReference type="InterPro" id="IPR017972">
    <property type="entry name" value="Cyt_P450_CS"/>
</dbReference>
<dbReference type="InterPro" id="IPR002401">
    <property type="entry name" value="Cyt_P450_E_grp-I"/>
</dbReference>
<dbReference type="InterPro" id="IPR036396">
    <property type="entry name" value="Cyt_P450_sf"/>
</dbReference>
<dbReference type="PANTHER" id="PTHR47944">
    <property type="entry name" value="CYTOCHROME P450 98A9"/>
    <property type="match status" value="1"/>
</dbReference>
<dbReference type="PANTHER" id="PTHR47944:SF18">
    <property type="entry name" value="FLAVONOID 3'-MONOOXYGENASE"/>
    <property type="match status" value="1"/>
</dbReference>
<dbReference type="Pfam" id="PF00067">
    <property type="entry name" value="p450"/>
    <property type="match status" value="1"/>
</dbReference>
<dbReference type="PRINTS" id="PR00463">
    <property type="entry name" value="EP450I"/>
</dbReference>
<dbReference type="PRINTS" id="PR00385">
    <property type="entry name" value="P450"/>
</dbReference>
<dbReference type="SUPFAM" id="SSF48264">
    <property type="entry name" value="Cytochrome P450"/>
    <property type="match status" value="1"/>
</dbReference>
<dbReference type="PROSITE" id="PS00086">
    <property type="entry name" value="CYTOCHROME_P450"/>
    <property type="match status" value="1"/>
</dbReference>
<feature type="chain" id="PRO_0000448075" description="Flavonoid 3',5'-hydroxylase CYP75B138">
    <location>
        <begin position="1"/>
        <end position="527"/>
    </location>
</feature>
<feature type="transmembrane region" description="Helical" evidence="2">
    <location>
        <begin position="6"/>
        <end position="26"/>
    </location>
</feature>
<feature type="binding site" description="axial binding residue" evidence="1">
    <location>
        <position position="459"/>
    </location>
    <ligand>
        <name>heme</name>
        <dbReference type="ChEBI" id="CHEBI:30413"/>
    </ligand>
    <ligandPart>
        <name>Fe</name>
        <dbReference type="ChEBI" id="CHEBI:18248"/>
    </ligandPart>
</feature>
<gene>
    <name evidence="4" type="primary">CYP75B138</name>
    <name evidence="4" type="synonym">CYP2</name>
</gene>
<reference key="1">
    <citation type="journal article" date="2019" name="Plant Physiol.">
        <title>Flavonol biosynthesis genes and their use in engineering the plant antidiabetic metabolite montbretin A.</title>
        <authorList>
            <person name="Irmisch S."/>
            <person name="Ruebsam H."/>
            <person name="Jancsik S."/>
            <person name="Man Saint Yuen M."/>
            <person name="Madilao L.L."/>
            <person name="Bohlmann J."/>
        </authorList>
    </citation>
    <scope>NUCLEOTIDE SEQUENCE [MRNA]</scope>
    <scope>FUNCTION</scope>
    <scope>CATALYTIC ACTIVITY</scope>
    <scope>TISSUE SPECIFICITY</scope>
</reference>
<name>CYP2_CROXC</name>
<evidence type="ECO:0000250" key="1">
    <source>
        <dbReference type="UniProtKB" id="Q96242"/>
    </source>
</evidence>
<evidence type="ECO:0000255" key="2"/>
<evidence type="ECO:0000269" key="3">
    <source>
    </source>
</evidence>
<evidence type="ECO:0000303" key="4">
    <source>
    </source>
</evidence>
<evidence type="ECO:0000305" key="5"/>
<keyword id="KW-0284">Flavonoid biosynthesis</keyword>
<keyword id="KW-0349">Heme</keyword>
<keyword id="KW-0408">Iron</keyword>
<keyword id="KW-0472">Membrane</keyword>
<keyword id="KW-0479">Metal-binding</keyword>
<keyword id="KW-0503">Monooxygenase</keyword>
<keyword id="KW-0521">NADP</keyword>
<keyword id="KW-0560">Oxidoreductase</keyword>
<keyword id="KW-0812">Transmembrane</keyword>
<keyword id="KW-1133">Transmembrane helix</keyword>
<sequence length="527" mass="58429">MTMTSLDIILFISAIVFLSIYYYNLFSNAKRSNGLKLPPGPKGYPVLGNLPQLGAKPHQALQAFSRVYGPLMRLRLGSVDLVVASSPSVAAQFLKNDSNFCARPPNSGAEHMAFNYHDLVFAPYGPRWRLLRKLSAVHLLGPKALDDNQNVREEELAVLARMLYERSRGGEPVNVGKEMHVCSTNALSRAMMGRRVFEKLAVGGGGVEEEEEMKKAEEFKDMVVEVMTLAGVFNIGDFVPWLKPFDIQGVVRKMKRVHRRYNVFLDKFIAECRSSAKPGANDLLSVLIGQRGKSDGSGGEITDTAIKALVLNLLTAGTDTSSSTIEWALTELIRHPDILKKAQQEIDSAVGRDRLVTESDVPKLPYLQAIVKENFRMHPATPLSLPRMSIEECDIGGYHIPKNSTLFVNIWAMGRDPSIWPDPMEFRPSRFLPGGQGEHLEVRGNHFELMPFGAGRRICAGTSMGIRVVHSTVATLIHAFDWKLPEGLTAEKIDMEEAFGISLQKAIPLMAHPIPRLAPKAYSPKMK</sequence>